<protein>
    <recommendedName>
        <fullName evidence="1">Hydroxylamine reductase</fullName>
        <ecNumber evidence="1">1.7.99.1</ecNumber>
    </recommendedName>
    <alternativeName>
        <fullName evidence="1">Hybrid-cluster protein</fullName>
        <shortName evidence="1">HCP</shortName>
    </alternativeName>
    <alternativeName>
        <fullName evidence="1">Prismane protein</fullName>
    </alternativeName>
</protein>
<accession>A8FSF3</accession>
<keyword id="KW-0001">2Fe-2S</keyword>
<keyword id="KW-0963">Cytoplasm</keyword>
<keyword id="KW-0408">Iron</keyword>
<keyword id="KW-0411">Iron-sulfur</keyword>
<keyword id="KW-0479">Metal-binding</keyword>
<keyword id="KW-0560">Oxidoreductase</keyword>
<keyword id="KW-1185">Reference proteome</keyword>
<name>HCP_SHESH</name>
<feature type="chain" id="PRO_1000075119" description="Hydroxylamine reductase">
    <location>
        <begin position="1"/>
        <end position="552"/>
    </location>
</feature>
<feature type="binding site" evidence="1">
    <location>
        <position position="3"/>
    </location>
    <ligand>
        <name>[2Fe-2S] cluster</name>
        <dbReference type="ChEBI" id="CHEBI:190135"/>
    </ligand>
</feature>
<feature type="binding site" evidence="1">
    <location>
        <position position="6"/>
    </location>
    <ligand>
        <name>[2Fe-2S] cluster</name>
        <dbReference type="ChEBI" id="CHEBI:190135"/>
    </ligand>
</feature>
<feature type="binding site" evidence="1">
    <location>
        <position position="18"/>
    </location>
    <ligand>
        <name>[2Fe-2S] cluster</name>
        <dbReference type="ChEBI" id="CHEBI:190135"/>
    </ligand>
</feature>
<feature type="binding site" evidence="1">
    <location>
        <position position="25"/>
    </location>
    <ligand>
        <name>[2Fe-2S] cluster</name>
        <dbReference type="ChEBI" id="CHEBI:190135"/>
    </ligand>
</feature>
<feature type="binding site" evidence="1">
    <location>
        <position position="250"/>
    </location>
    <ligand>
        <name>hybrid [4Fe-2O-2S] cluster</name>
        <dbReference type="ChEBI" id="CHEBI:60519"/>
    </ligand>
</feature>
<feature type="binding site" evidence="1">
    <location>
        <position position="274"/>
    </location>
    <ligand>
        <name>hybrid [4Fe-2O-2S] cluster</name>
        <dbReference type="ChEBI" id="CHEBI:60519"/>
    </ligand>
</feature>
<feature type="binding site" evidence="1">
    <location>
        <position position="318"/>
    </location>
    <ligand>
        <name>hybrid [4Fe-2O-2S] cluster</name>
        <dbReference type="ChEBI" id="CHEBI:60519"/>
    </ligand>
</feature>
<feature type="binding site" description="via persulfide group" evidence="1">
    <location>
        <position position="406"/>
    </location>
    <ligand>
        <name>hybrid [4Fe-2O-2S] cluster</name>
        <dbReference type="ChEBI" id="CHEBI:60519"/>
    </ligand>
</feature>
<feature type="binding site" evidence="1">
    <location>
        <position position="434"/>
    </location>
    <ligand>
        <name>hybrid [4Fe-2O-2S] cluster</name>
        <dbReference type="ChEBI" id="CHEBI:60519"/>
    </ligand>
</feature>
<feature type="binding site" evidence="1">
    <location>
        <position position="459"/>
    </location>
    <ligand>
        <name>hybrid [4Fe-2O-2S] cluster</name>
        <dbReference type="ChEBI" id="CHEBI:60519"/>
    </ligand>
</feature>
<feature type="binding site" evidence="1">
    <location>
        <position position="493"/>
    </location>
    <ligand>
        <name>hybrid [4Fe-2O-2S] cluster</name>
        <dbReference type="ChEBI" id="CHEBI:60519"/>
    </ligand>
</feature>
<feature type="binding site" evidence="1">
    <location>
        <position position="495"/>
    </location>
    <ligand>
        <name>hybrid [4Fe-2O-2S] cluster</name>
        <dbReference type="ChEBI" id="CHEBI:60519"/>
    </ligand>
</feature>
<feature type="modified residue" description="Cysteine persulfide" evidence="1">
    <location>
        <position position="406"/>
    </location>
</feature>
<dbReference type="EC" id="1.7.99.1" evidence="1"/>
<dbReference type="EMBL" id="CP000821">
    <property type="protein sequence ID" value="ABV35776.1"/>
    <property type="molecule type" value="Genomic_DNA"/>
</dbReference>
<dbReference type="RefSeq" id="WP_012141512.1">
    <property type="nucleotide sequence ID" value="NC_009831.1"/>
</dbReference>
<dbReference type="SMR" id="A8FSF3"/>
<dbReference type="STRING" id="425104.Ssed_1165"/>
<dbReference type="KEGG" id="sse:Ssed_1165"/>
<dbReference type="eggNOG" id="COG1151">
    <property type="taxonomic scope" value="Bacteria"/>
</dbReference>
<dbReference type="HOGENOM" id="CLU_038344_2_0_6"/>
<dbReference type="OrthoDB" id="9761526at2"/>
<dbReference type="Proteomes" id="UP000002015">
    <property type="component" value="Chromosome"/>
</dbReference>
<dbReference type="GO" id="GO:0005737">
    <property type="term" value="C:cytoplasm"/>
    <property type="evidence" value="ECO:0007669"/>
    <property type="project" value="UniProtKB-SubCell"/>
</dbReference>
<dbReference type="GO" id="GO:0051537">
    <property type="term" value="F:2 iron, 2 sulfur cluster binding"/>
    <property type="evidence" value="ECO:0007669"/>
    <property type="project" value="UniProtKB-KW"/>
</dbReference>
<dbReference type="GO" id="GO:0050418">
    <property type="term" value="F:hydroxylamine reductase activity"/>
    <property type="evidence" value="ECO:0007669"/>
    <property type="project" value="UniProtKB-UniRule"/>
</dbReference>
<dbReference type="GO" id="GO:0046872">
    <property type="term" value="F:metal ion binding"/>
    <property type="evidence" value="ECO:0007669"/>
    <property type="project" value="UniProtKB-KW"/>
</dbReference>
<dbReference type="GO" id="GO:0004601">
    <property type="term" value="F:peroxidase activity"/>
    <property type="evidence" value="ECO:0007669"/>
    <property type="project" value="TreeGrafter"/>
</dbReference>
<dbReference type="GO" id="GO:0042542">
    <property type="term" value="P:response to hydrogen peroxide"/>
    <property type="evidence" value="ECO:0007669"/>
    <property type="project" value="TreeGrafter"/>
</dbReference>
<dbReference type="CDD" id="cd01914">
    <property type="entry name" value="HCP"/>
    <property type="match status" value="1"/>
</dbReference>
<dbReference type="FunFam" id="1.20.1270.20:FF:000001">
    <property type="entry name" value="Hydroxylamine reductase"/>
    <property type="match status" value="1"/>
</dbReference>
<dbReference type="FunFam" id="1.20.1270.20:FF:000002">
    <property type="entry name" value="Hydroxylamine reductase"/>
    <property type="match status" value="1"/>
</dbReference>
<dbReference type="FunFam" id="3.40.50.2030:FF:000001">
    <property type="entry name" value="Hydroxylamine reductase"/>
    <property type="match status" value="1"/>
</dbReference>
<dbReference type="FunFam" id="3.40.50.2030:FF:000002">
    <property type="entry name" value="Hydroxylamine reductase"/>
    <property type="match status" value="1"/>
</dbReference>
<dbReference type="Gene3D" id="1.20.1270.20">
    <property type="match status" value="2"/>
</dbReference>
<dbReference type="Gene3D" id="3.40.50.2030">
    <property type="match status" value="2"/>
</dbReference>
<dbReference type="HAMAP" id="MF_00069">
    <property type="entry name" value="Hydroxylam_reduct"/>
    <property type="match status" value="1"/>
</dbReference>
<dbReference type="InterPro" id="IPR004137">
    <property type="entry name" value="HCP/CODH"/>
</dbReference>
<dbReference type="InterPro" id="IPR010048">
    <property type="entry name" value="Hydroxylam_reduct"/>
</dbReference>
<dbReference type="InterPro" id="IPR016099">
    <property type="entry name" value="Prismane-like_a/b-sand"/>
</dbReference>
<dbReference type="InterPro" id="IPR011254">
    <property type="entry name" value="Prismane-like_sf"/>
</dbReference>
<dbReference type="InterPro" id="IPR016100">
    <property type="entry name" value="Prismane_a-bundle"/>
</dbReference>
<dbReference type="NCBIfam" id="TIGR01703">
    <property type="entry name" value="hybrid_clust"/>
    <property type="match status" value="1"/>
</dbReference>
<dbReference type="NCBIfam" id="NF003658">
    <property type="entry name" value="PRK05290.1"/>
    <property type="match status" value="1"/>
</dbReference>
<dbReference type="PANTHER" id="PTHR30109">
    <property type="entry name" value="HYDROXYLAMINE REDUCTASE"/>
    <property type="match status" value="1"/>
</dbReference>
<dbReference type="PANTHER" id="PTHR30109:SF0">
    <property type="entry name" value="HYDROXYLAMINE REDUCTASE"/>
    <property type="match status" value="1"/>
</dbReference>
<dbReference type="Pfam" id="PF03063">
    <property type="entry name" value="Prismane"/>
    <property type="match status" value="1"/>
</dbReference>
<dbReference type="PIRSF" id="PIRSF000076">
    <property type="entry name" value="HCP"/>
    <property type="match status" value="1"/>
</dbReference>
<dbReference type="SUPFAM" id="SSF56821">
    <property type="entry name" value="Prismane protein-like"/>
    <property type="match status" value="1"/>
</dbReference>
<gene>
    <name evidence="1" type="primary">hcp</name>
    <name type="ordered locus">Ssed_1165</name>
</gene>
<proteinExistence type="inferred from homology"/>
<reference key="1">
    <citation type="submission" date="2007-08" db="EMBL/GenBank/DDBJ databases">
        <title>Complete sequence of Shewanella sediminis HAW-EB3.</title>
        <authorList>
            <consortium name="US DOE Joint Genome Institute"/>
            <person name="Copeland A."/>
            <person name="Lucas S."/>
            <person name="Lapidus A."/>
            <person name="Barry K."/>
            <person name="Glavina del Rio T."/>
            <person name="Dalin E."/>
            <person name="Tice H."/>
            <person name="Pitluck S."/>
            <person name="Chertkov O."/>
            <person name="Brettin T."/>
            <person name="Bruce D."/>
            <person name="Detter J.C."/>
            <person name="Han C."/>
            <person name="Schmutz J."/>
            <person name="Larimer F."/>
            <person name="Land M."/>
            <person name="Hauser L."/>
            <person name="Kyrpides N."/>
            <person name="Kim E."/>
            <person name="Zhao J.-S."/>
            <person name="Richardson P."/>
        </authorList>
    </citation>
    <scope>NUCLEOTIDE SEQUENCE [LARGE SCALE GENOMIC DNA]</scope>
    <source>
        <strain>HAW-EB3</strain>
    </source>
</reference>
<evidence type="ECO:0000255" key="1">
    <source>
        <dbReference type="HAMAP-Rule" id="MF_00069"/>
    </source>
</evidence>
<organism>
    <name type="scientific">Shewanella sediminis (strain HAW-EB3)</name>
    <dbReference type="NCBI Taxonomy" id="425104"/>
    <lineage>
        <taxon>Bacteria</taxon>
        <taxon>Pseudomonadati</taxon>
        <taxon>Pseudomonadota</taxon>
        <taxon>Gammaproteobacteria</taxon>
        <taxon>Alteromonadales</taxon>
        <taxon>Shewanellaceae</taxon>
        <taxon>Shewanella</taxon>
    </lineage>
</organism>
<comment type="function">
    <text evidence="1">Catalyzes the reduction of hydroxylamine to form NH(3) and H(2)O.</text>
</comment>
<comment type="catalytic activity">
    <reaction evidence="1">
        <text>A + NH4(+) + H2O = hydroxylamine + AH2 + H(+)</text>
        <dbReference type="Rhea" id="RHEA:22052"/>
        <dbReference type="ChEBI" id="CHEBI:13193"/>
        <dbReference type="ChEBI" id="CHEBI:15377"/>
        <dbReference type="ChEBI" id="CHEBI:15378"/>
        <dbReference type="ChEBI" id="CHEBI:15429"/>
        <dbReference type="ChEBI" id="CHEBI:17499"/>
        <dbReference type="ChEBI" id="CHEBI:28938"/>
        <dbReference type="EC" id="1.7.99.1"/>
    </reaction>
</comment>
<comment type="cofactor">
    <cofactor evidence="1">
        <name>[2Fe-2S] cluster</name>
        <dbReference type="ChEBI" id="CHEBI:190135"/>
    </cofactor>
    <text evidence="1">Binds 1 [2Fe-2S] cluster.</text>
</comment>
<comment type="cofactor">
    <cofactor evidence="1">
        <name>hybrid [4Fe-2O-2S] cluster</name>
        <dbReference type="ChEBI" id="CHEBI:60519"/>
    </cofactor>
    <text evidence="1">Binds 1 hybrid [4Fe-2O-2S] cluster.</text>
</comment>
<comment type="subcellular location">
    <subcellularLocation>
        <location evidence="1">Cytoplasm</location>
    </subcellularLocation>
</comment>
<comment type="similarity">
    <text evidence="1">Belongs to the HCP family.</text>
</comment>
<sequence>MFCIQCEQTIRTPAGNGCSYSQGMCGKLAETSDLQDLLIYVLQGVSAYAVKAREFDIIDHEIDTFVPKAFFATLTNVNFDDARLVEYVEQANAYRGRLQDAYETACTAKGVTPEQMSAPAQLILATSKPEMITQAAQAAPNRGDVHEDILGLRLLCLYGLKGAAAYMEHARVLSQTNDEVAGQFHEIMAFLGEDSVDVDKLFATSMEIGQLNYKVMAMLDEGETESFGHPEPTQVNTVAVKGKAILVSGHDMVDLELILKQTEGKGINVFTHGEMLPALAYPEFKKYPHLVGNYGSAWQNQQKEFANFPGAVVMTSNCIIDPNVGSYADRIFTRSIVGWPGVTHLVGDDFTPVIEKALALDGFIYDEIPHLITIGFARNALMAAAPAVIDNVKNGSIKHFFLVGGCDGDKAERSYFTDIATQAPDDSVILTLGCGKYKFNKLEFGDINGIPRLLDIGQCNDSYSAIQLAIALSEAFECEINELPLSIVLSWFEQKAIVVLLTLLSLGVKNIRTGPTPPAFLTPNLLKILEDKFGLRNTTTVEEDLKTILNVA</sequence>